<accession>B7J4A3</accession>
<comment type="function">
    <text evidence="1">One of the primary rRNA binding proteins, it binds directly to 16S rRNA where it nucleates assembly of the body of the 30S subunit.</text>
</comment>
<comment type="function">
    <text evidence="1">With S5 and S12 plays an important role in translational accuracy.</text>
</comment>
<comment type="subunit">
    <text evidence="1">Part of the 30S ribosomal subunit. Contacts protein S5. The interaction surface between S4 and S5 is involved in control of translational fidelity.</text>
</comment>
<comment type="similarity">
    <text evidence="1">Belongs to the universal ribosomal protein uS4 family.</text>
</comment>
<name>RS4_ACIF2</name>
<sequence length="208" mass="23366">MAKYTGPSCRLCRREGGKLFLKGEKCFSDKCPVSIRAYAPGQHGQRRGRVSEYGGQLREKQKIRRIYGVLEGQFRRYFQRASQARGVTGELLLRFLELRLDNVAYRLGFGASRAEARQVVRHGHILVNGRRVDIPSYQVRAGDVVSVAEAARTHIRIAASVEATAGRGFPEWVSMDTTELKATIKAVPVREDMAPDLNEQVVVELYSK</sequence>
<dbReference type="EMBL" id="CP001219">
    <property type="protein sequence ID" value="ACK80157.1"/>
    <property type="molecule type" value="Genomic_DNA"/>
</dbReference>
<dbReference type="RefSeq" id="WP_012536098.1">
    <property type="nucleotide sequence ID" value="NC_011761.1"/>
</dbReference>
<dbReference type="SMR" id="B7J4A3"/>
<dbReference type="STRING" id="243159.AFE_0353"/>
<dbReference type="PaxDb" id="243159-AFE_0353"/>
<dbReference type="GeneID" id="65279730"/>
<dbReference type="KEGG" id="afr:AFE_0353"/>
<dbReference type="eggNOG" id="COG0522">
    <property type="taxonomic scope" value="Bacteria"/>
</dbReference>
<dbReference type="HOGENOM" id="CLU_092403_0_2_6"/>
<dbReference type="Proteomes" id="UP000001362">
    <property type="component" value="Chromosome"/>
</dbReference>
<dbReference type="GO" id="GO:0015935">
    <property type="term" value="C:small ribosomal subunit"/>
    <property type="evidence" value="ECO:0007669"/>
    <property type="project" value="InterPro"/>
</dbReference>
<dbReference type="GO" id="GO:0019843">
    <property type="term" value="F:rRNA binding"/>
    <property type="evidence" value="ECO:0007669"/>
    <property type="project" value="UniProtKB-UniRule"/>
</dbReference>
<dbReference type="GO" id="GO:0003735">
    <property type="term" value="F:structural constituent of ribosome"/>
    <property type="evidence" value="ECO:0007669"/>
    <property type="project" value="InterPro"/>
</dbReference>
<dbReference type="GO" id="GO:0042274">
    <property type="term" value="P:ribosomal small subunit biogenesis"/>
    <property type="evidence" value="ECO:0007669"/>
    <property type="project" value="TreeGrafter"/>
</dbReference>
<dbReference type="GO" id="GO:0006412">
    <property type="term" value="P:translation"/>
    <property type="evidence" value="ECO:0007669"/>
    <property type="project" value="UniProtKB-UniRule"/>
</dbReference>
<dbReference type="CDD" id="cd00165">
    <property type="entry name" value="S4"/>
    <property type="match status" value="1"/>
</dbReference>
<dbReference type="FunFam" id="1.10.1050.10:FF:000001">
    <property type="entry name" value="30S ribosomal protein S4"/>
    <property type="match status" value="1"/>
</dbReference>
<dbReference type="FunFam" id="3.10.290.10:FF:000001">
    <property type="entry name" value="30S ribosomal protein S4"/>
    <property type="match status" value="1"/>
</dbReference>
<dbReference type="Gene3D" id="1.10.1050.10">
    <property type="entry name" value="Ribosomal Protein S4 Delta 41, Chain A, domain 1"/>
    <property type="match status" value="1"/>
</dbReference>
<dbReference type="Gene3D" id="3.10.290.10">
    <property type="entry name" value="RNA-binding S4 domain"/>
    <property type="match status" value="1"/>
</dbReference>
<dbReference type="HAMAP" id="MF_01306_B">
    <property type="entry name" value="Ribosomal_uS4_B"/>
    <property type="match status" value="1"/>
</dbReference>
<dbReference type="InterPro" id="IPR022801">
    <property type="entry name" value="Ribosomal_uS4"/>
</dbReference>
<dbReference type="InterPro" id="IPR005709">
    <property type="entry name" value="Ribosomal_uS4_bac-type"/>
</dbReference>
<dbReference type="InterPro" id="IPR001912">
    <property type="entry name" value="Ribosomal_uS4_N"/>
</dbReference>
<dbReference type="InterPro" id="IPR002942">
    <property type="entry name" value="S4_RNA-bd"/>
</dbReference>
<dbReference type="InterPro" id="IPR036986">
    <property type="entry name" value="S4_RNA-bd_sf"/>
</dbReference>
<dbReference type="NCBIfam" id="NF003717">
    <property type="entry name" value="PRK05327.1"/>
    <property type="match status" value="1"/>
</dbReference>
<dbReference type="NCBIfam" id="TIGR01017">
    <property type="entry name" value="rpsD_bact"/>
    <property type="match status" value="1"/>
</dbReference>
<dbReference type="PANTHER" id="PTHR11831">
    <property type="entry name" value="30S 40S RIBOSOMAL PROTEIN"/>
    <property type="match status" value="1"/>
</dbReference>
<dbReference type="PANTHER" id="PTHR11831:SF4">
    <property type="entry name" value="SMALL RIBOSOMAL SUBUNIT PROTEIN US4M"/>
    <property type="match status" value="1"/>
</dbReference>
<dbReference type="Pfam" id="PF00163">
    <property type="entry name" value="Ribosomal_S4"/>
    <property type="match status" value="1"/>
</dbReference>
<dbReference type="Pfam" id="PF01479">
    <property type="entry name" value="S4"/>
    <property type="match status" value="1"/>
</dbReference>
<dbReference type="SMART" id="SM01390">
    <property type="entry name" value="Ribosomal_S4"/>
    <property type="match status" value="1"/>
</dbReference>
<dbReference type="SMART" id="SM00363">
    <property type="entry name" value="S4"/>
    <property type="match status" value="1"/>
</dbReference>
<dbReference type="SUPFAM" id="SSF55174">
    <property type="entry name" value="Alpha-L RNA-binding motif"/>
    <property type="match status" value="1"/>
</dbReference>
<dbReference type="PROSITE" id="PS50889">
    <property type="entry name" value="S4"/>
    <property type="match status" value="1"/>
</dbReference>
<protein>
    <recommendedName>
        <fullName evidence="1">Small ribosomal subunit protein uS4</fullName>
    </recommendedName>
    <alternativeName>
        <fullName evidence="2">30S ribosomal protein S4</fullName>
    </alternativeName>
</protein>
<evidence type="ECO:0000255" key="1">
    <source>
        <dbReference type="HAMAP-Rule" id="MF_01306"/>
    </source>
</evidence>
<evidence type="ECO:0000305" key="2"/>
<reference key="1">
    <citation type="journal article" date="2008" name="BMC Genomics">
        <title>Acidithiobacillus ferrooxidans metabolism: from genome sequence to industrial applications.</title>
        <authorList>
            <person name="Valdes J."/>
            <person name="Pedroso I."/>
            <person name="Quatrini R."/>
            <person name="Dodson R.J."/>
            <person name="Tettelin H."/>
            <person name="Blake R. II"/>
            <person name="Eisen J.A."/>
            <person name="Holmes D.S."/>
        </authorList>
    </citation>
    <scope>NUCLEOTIDE SEQUENCE [LARGE SCALE GENOMIC DNA]</scope>
    <source>
        <strain>ATCC 23270 / DSM 14882 / CIP 104768 / NCIMB 8455</strain>
    </source>
</reference>
<feature type="chain" id="PRO_1000140673" description="Small ribosomal subunit protein uS4">
    <location>
        <begin position="1"/>
        <end position="208"/>
    </location>
</feature>
<feature type="domain" description="S4 RNA-binding" evidence="1">
    <location>
        <begin position="98"/>
        <end position="159"/>
    </location>
</feature>
<proteinExistence type="inferred from homology"/>
<organism>
    <name type="scientific">Acidithiobacillus ferrooxidans (strain ATCC 23270 / DSM 14882 / CIP 104768 / NCIMB 8455)</name>
    <name type="common">Ferrobacillus ferrooxidans (strain ATCC 23270)</name>
    <dbReference type="NCBI Taxonomy" id="243159"/>
    <lineage>
        <taxon>Bacteria</taxon>
        <taxon>Pseudomonadati</taxon>
        <taxon>Pseudomonadota</taxon>
        <taxon>Acidithiobacillia</taxon>
        <taxon>Acidithiobacillales</taxon>
        <taxon>Acidithiobacillaceae</taxon>
        <taxon>Acidithiobacillus</taxon>
    </lineage>
</organism>
<gene>
    <name evidence="1" type="primary">rpsD</name>
    <name type="ordered locus">AFE_0353</name>
</gene>
<keyword id="KW-1185">Reference proteome</keyword>
<keyword id="KW-0687">Ribonucleoprotein</keyword>
<keyword id="KW-0689">Ribosomal protein</keyword>
<keyword id="KW-0694">RNA-binding</keyword>
<keyword id="KW-0699">rRNA-binding</keyword>